<reference key="1">
    <citation type="journal article" date="1997" name="Eur. J. Biochem.">
        <title>Identification of the active site histidine in the corrinoid protein MtrA of the energy-conserving methyltransferase complex from Methanobacterium thermoautotrophicum.</title>
        <authorList>
            <person name="Harms U."/>
            <person name="Thauer R.K."/>
        </authorList>
    </citation>
    <scope>NUCLEOTIDE SEQUENCE [GENOMIC DNA]</scope>
</reference>
<reference key="2">
    <citation type="journal article" date="2002" name="Proc. Natl. Acad. Sci. U.S.A.">
        <title>The complete genome of hyperthermophile Methanopyrus kandleri AV19 and monophyly of archaeal methanogens.</title>
        <authorList>
            <person name="Slesarev A.I."/>
            <person name="Mezhevaya K.V."/>
            <person name="Makarova K.S."/>
            <person name="Polushin N.N."/>
            <person name="Shcherbinina O.V."/>
            <person name="Shakhova V.V."/>
            <person name="Belova G.I."/>
            <person name="Aravind L."/>
            <person name="Natale D.A."/>
            <person name="Rogozin I.B."/>
            <person name="Tatusov R.L."/>
            <person name="Wolf Y.I."/>
            <person name="Stetter K.O."/>
            <person name="Malykh A.G."/>
            <person name="Koonin E.V."/>
            <person name="Kozyavkin S.A."/>
        </authorList>
    </citation>
    <scope>NUCLEOTIDE SEQUENCE [LARGE SCALE GENOMIC DNA]</scope>
    <source>
        <strain>AV19 / DSM 6324 / JCM 9639 / NBRC 100938</strain>
    </source>
</reference>
<name>MTRD_METKA</name>
<comment type="function">
    <text evidence="1">Part of a complex that catalyzes the formation of methyl-coenzyme M and tetrahydromethanopterin from coenzyme M and methyl-tetrahydromethanopterin. This is an energy-conserving, sodium-ion translocating step.</text>
</comment>
<comment type="catalytic activity">
    <reaction>
        <text>5-methyl-5,6,7,8-tetrahydromethanopterin + coenzyme M + 2 Na(+)(in) = 5,6,7,8-tetrahydromethanopterin + methyl-coenzyme M + 2 Na(+)(out)</text>
        <dbReference type="Rhea" id="RHEA:53492"/>
        <dbReference type="ChEBI" id="CHEBI:29101"/>
        <dbReference type="ChEBI" id="CHEBI:58103"/>
        <dbReference type="ChEBI" id="CHEBI:58116"/>
        <dbReference type="ChEBI" id="CHEBI:58286"/>
        <dbReference type="ChEBI" id="CHEBI:58319"/>
        <dbReference type="EC" id="7.2.1.4"/>
    </reaction>
</comment>
<comment type="pathway">
    <text>One-carbon metabolism; methanogenesis from CO(2); methyl-coenzyme M from 5,10-methylene-5,6,7,8-tetrahydromethanopterin: step 2/2.</text>
</comment>
<comment type="subunit">
    <text evidence="1">The complex is composed of 8 subunits; MtrA, MtrB, MtrC, MtrD, MtrE, MtrF, MtrG and MtrH.</text>
</comment>
<comment type="subcellular location">
    <subcellularLocation>
        <location evidence="3">Cell membrane</location>
        <topology evidence="3">Multi-pass membrane protein</topology>
    </subcellularLocation>
</comment>
<comment type="similarity">
    <text evidence="3">Belongs to the MtrD family.</text>
</comment>
<gene>
    <name type="primary">mtrD</name>
    <name type="ordered locus">MK0657</name>
</gene>
<evidence type="ECO:0000250" key="1"/>
<evidence type="ECO:0000255" key="2"/>
<evidence type="ECO:0000305" key="3"/>
<protein>
    <recommendedName>
        <fullName>Tetrahydromethanopterin S-methyltransferase subunit D</fullName>
        <ecNumber>7.2.1.4</ecNumber>
    </recommendedName>
    <alternativeName>
        <fullName>N5-methyltetrahydromethanopterin--coenzyme M methyltransferase subunit D</fullName>
    </alternativeName>
</protein>
<feature type="chain" id="PRO_0000147531" description="Tetrahydromethanopterin S-methyltransferase subunit D">
    <location>
        <begin position="1"/>
        <end position="225"/>
    </location>
</feature>
<feature type="transmembrane region" description="Helical" evidence="2">
    <location>
        <begin position="5"/>
        <end position="25"/>
    </location>
</feature>
<feature type="transmembrane region" description="Helical" evidence="2">
    <location>
        <begin position="40"/>
        <end position="60"/>
    </location>
</feature>
<feature type="transmembrane region" description="Helical" evidence="2">
    <location>
        <begin position="67"/>
        <end position="87"/>
    </location>
</feature>
<feature type="transmembrane region" description="Helical" evidence="2">
    <location>
        <begin position="132"/>
        <end position="152"/>
    </location>
</feature>
<feature type="transmembrane region" description="Helical" evidence="2">
    <location>
        <begin position="161"/>
        <end position="181"/>
    </location>
</feature>
<feature type="transmembrane region" description="Helical" evidence="2">
    <location>
        <begin position="204"/>
        <end position="224"/>
    </location>
</feature>
<keyword id="KW-1003">Cell membrane</keyword>
<keyword id="KW-0472">Membrane</keyword>
<keyword id="KW-0484">Methanogenesis</keyword>
<keyword id="KW-0489">Methyltransferase</keyword>
<keyword id="KW-0554">One-carbon metabolism</keyword>
<keyword id="KW-1185">Reference proteome</keyword>
<keyword id="KW-0808">Transferase</keyword>
<keyword id="KW-1278">Translocase</keyword>
<keyword id="KW-0812">Transmembrane</keyword>
<keyword id="KW-1133">Transmembrane helix</keyword>
<proteinExistence type="inferred from homology"/>
<dbReference type="EC" id="7.2.1.4"/>
<dbReference type="EMBL" id="Y14428">
    <property type="protein sequence ID" value="CAA74768.1"/>
    <property type="molecule type" value="Genomic_DNA"/>
</dbReference>
<dbReference type="EMBL" id="AE009439">
    <property type="protein sequence ID" value="AAM01872.1"/>
    <property type="molecule type" value="Genomic_DNA"/>
</dbReference>
<dbReference type="RefSeq" id="WP_011019027.1">
    <property type="nucleotide sequence ID" value="NC_003551.1"/>
</dbReference>
<dbReference type="SMR" id="O32864"/>
<dbReference type="FunCoup" id="O32864">
    <property type="interactions" value="69"/>
</dbReference>
<dbReference type="STRING" id="190192.MK0657"/>
<dbReference type="PaxDb" id="190192-MK0657"/>
<dbReference type="EnsemblBacteria" id="AAM01872">
    <property type="protein sequence ID" value="AAM01872"/>
    <property type="gene ID" value="MK0657"/>
</dbReference>
<dbReference type="GeneID" id="1476758"/>
<dbReference type="KEGG" id="mka:MK0657"/>
<dbReference type="PATRIC" id="fig|190192.8.peg.696"/>
<dbReference type="HOGENOM" id="CLU_1109510_0_0_2"/>
<dbReference type="InParanoid" id="O32864"/>
<dbReference type="OrthoDB" id="147994at2157"/>
<dbReference type="UniPathway" id="UPA00640">
    <property type="reaction ID" value="UER00698"/>
</dbReference>
<dbReference type="Proteomes" id="UP000001826">
    <property type="component" value="Chromosome"/>
</dbReference>
<dbReference type="GO" id="GO:0005737">
    <property type="term" value="C:cytoplasm"/>
    <property type="evidence" value="ECO:0007669"/>
    <property type="project" value="InterPro"/>
</dbReference>
<dbReference type="GO" id="GO:0005886">
    <property type="term" value="C:plasma membrane"/>
    <property type="evidence" value="ECO:0007669"/>
    <property type="project" value="UniProtKB-SubCell"/>
</dbReference>
<dbReference type="GO" id="GO:0012506">
    <property type="term" value="C:vesicle membrane"/>
    <property type="evidence" value="ECO:0007669"/>
    <property type="project" value="InterPro"/>
</dbReference>
<dbReference type="GO" id="GO:0030269">
    <property type="term" value="F:tetrahydromethanopterin S-methyltransferase activity"/>
    <property type="evidence" value="ECO:0007669"/>
    <property type="project" value="UniProtKB-UniRule"/>
</dbReference>
<dbReference type="GO" id="GO:0019386">
    <property type="term" value="P:methanogenesis, from carbon dioxide"/>
    <property type="evidence" value="ECO:0007669"/>
    <property type="project" value="UniProtKB-UniRule"/>
</dbReference>
<dbReference type="GO" id="GO:0032259">
    <property type="term" value="P:methylation"/>
    <property type="evidence" value="ECO:0007669"/>
    <property type="project" value="UniProtKB-KW"/>
</dbReference>
<dbReference type="GO" id="GO:0006730">
    <property type="term" value="P:one-carbon metabolic process"/>
    <property type="evidence" value="ECO:0007669"/>
    <property type="project" value="UniProtKB-UniRule"/>
</dbReference>
<dbReference type="HAMAP" id="MF_01097">
    <property type="entry name" value="MtrD"/>
    <property type="match status" value="1"/>
</dbReference>
<dbReference type="InterPro" id="IPR005779">
    <property type="entry name" value="MeTrfase_D"/>
</dbReference>
<dbReference type="NCBIfam" id="TIGR01112">
    <property type="entry name" value="mtrD"/>
    <property type="match status" value="1"/>
</dbReference>
<dbReference type="Pfam" id="PF04207">
    <property type="entry name" value="MtrD"/>
    <property type="match status" value="1"/>
</dbReference>
<dbReference type="PIRSF" id="PIRSF016552">
    <property type="entry name" value="MtrD"/>
    <property type="match status" value="1"/>
</dbReference>
<accession>O32864</accession>
<organism>
    <name type="scientific">Methanopyrus kandleri (strain AV19 / DSM 6324 / JCM 9639 / NBRC 100938)</name>
    <dbReference type="NCBI Taxonomy" id="190192"/>
    <lineage>
        <taxon>Archaea</taxon>
        <taxon>Methanobacteriati</taxon>
        <taxon>Methanobacteriota</taxon>
        <taxon>Methanomada group</taxon>
        <taxon>Methanopyri</taxon>
        <taxon>Methanopyrales</taxon>
        <taxon>Methanopyraceae</taxon>
        <taxon>Methanopyrus</taxon>
    </lineage>
</organism>
<sequence length="225" mass="22872">MDKLIAVLVLITLGSIMVNVGVHYVPVGGAPAAMATATGVGTGTTQLAAGSGLTGLITAAAMSQKPFLVILWNGALGAATMMAITMLVGNFIYVYGVGCPPCSAKVDKDPITGWDQEAYVTPGTEGHGIPTVSFVSGILGGLLGGSGGAMVYYALYKVLGMSAALAGILAMGFFYANAVLASYNIGGTIEGYHDPKFTRLPKAVVCSLVFGIVASVIAYYLSTLM</sequence>